<name>ECO1_YARLI</name>
<dbReference type="EC" id="2.3.1.-"/>
<dbReference type="EMBL" id="CR382131">
    <property type="protein sequence ID" value="CAG79437.1"/>
    <property type="molecule type" value="Genomic_DNA"/>
</dbReference>
<dbReference type="RefSeq" id="XP_503844.1">
    <property type="nucleotide sequence ID" value="XM_503844.1"/>
</dbReference>
<dbReference type="SMR" id="Q6C668"/>
<dbReference type="FunCoup" id="Q6C668">
    <property type="interactions" value="28"/>
</dbReference>
<dbReference type="STRING" id="284591.Q6C668"/>
<dbReference type="EnsemblFungi" id="CAG79437">
    <property type="protein sequence ID" value="CAG79437"/>
    <property type="gene ID" value="YALI0_E12023g"/>
</dbReference>
<dbReference type="KEGG" id="yli:2912808"/>
<dbReference type="VEuPathDB" id="FungiDB:YALI0_E12023g"/>
<dbReference type="HOGENOM" id="CLU_1027468_0_0_1"/>
<dbReference type="InParanoid" id="Q6C668"/>
<dbReference type="OMA" id="PSITHQE"/>
<dbReference type="OrthoDB" id="119744at4891"/>
<dbReference type="Proteomes" id="UP000001300">
    <property type="component" value="Chromosome E"/>
</dbReference>
<dbReference type="GO" id="GO:0000785">
    <property type="term" value="C:chromatin"/>
    <property type="evidence" value="ECO:0000318"/>
    <property type="project" value="GO_Central"/>
</dbReference>
<dbReference type="GO" id="GO:0005634">
    <property type="term" value="C:nucleus"/>
    <property type="evidence" value="ECO:0000318"/>
    <property type="project" value="GO_Central"/>
</dbReference>
<dbReference type="GO" id="GO:0061733">
    <property type="term" value="F:protein-lysine-acetyltransferase activity"/>
    <property type="evidence" value="ECO:0000318"/>
    <property type="project" value="GO_Central"/>
</dbReference>
<dbReference type="GO" id="GO:0008270">
    <property type="term" value="F:zinc ion binding"/>
    <property type="evidence" value="ECO:0007669"/>
    <property type="project" value="UniProtKB-KW"/>
</dbReference>
<dbReference type="GO" id="GO:0007064">
    <property type="term" value="P:mitotic sister chromatid cohesion"/>
    <property type="evidence" value="ECO:0000318"/>
    <property type="project" value="GO_Central"/>
</dbReference>
<dbReference type="Gene3D" id="3.40.630.30">
    <property type="match status" value="1"/>
</dbReference>
<dbReference type="InterPro" id="IPR028005">
    <property type="entry name" value="AcTrfase_ESCO_Znf_dom"/>
</dbReference>
<dbReference type="InterPro" id="IPR028009">
    <property type="entry name" value="ESCO_Acetyltransf_dom"/>
</dbReference>
<dbReference type="PANTHER" id="PTHR45884">
    <property type="entry name" value="N-ACETYLTRANSFERASE ECO"/>
    <property type="match status" value="1"/>
</dbReference>
<dbReference type="PANTHER" id="PTHR45884:SF2">
    <property type="entry name" value="N-ACETYLTRANSFERASE ECO"/>
    <property type="match status" value="1"/>
</dbReference>
<dbReference type="Pfam" id="PF13880">
    <property type="entry name" value="Acetyltransf_13"/>
    <property type="match status" value="1"/>
</dbReference>
<dbReference type="Pfam" id="PF13878">
    <property type="entry name" value="zf-C2H2_3"/>
    <property type="match status" value="1"/>
</dbReference>
<accession>Q6C668</accession>
<gene>
    <name type="primary">ECO1</name>
    <name type="ordered locus">YALI0E12023g</name>
</gene>
<organism>
    <name type="scientific">Yarrowia lipolytica (strain CLIB 122 / E 150)</name>
    <name type="common">Yeast</name>
    <name type="synonym">Candida lipolytica</name>
    <dbReference type="NCBI Taxonomy" id="284591"/>
    <lineage>
        <taxon>Eukaryota</taxon>
        <taxon>Fungi</taxon>
        <taxon>Dikarya</taxon>
        <taxon>Ascomycota</taxon>
        <taxon>Saccharomycotina</taxon>
        <taxon>Dipodascomycetes</taxon>
        <taxon>Dipodascales</taxon>
        <taxon>Dipodascales incertae sedis</taxon>
        <taxon>Yarrowia</taxon>
    </lineage>
</organism>
<sequence>MKTYRAKRKYLSESEDDVFSSSPTQSPETSPLQPPNESRLNIKAAQAVSPCQKRAKVVKKPAKTKAPVQMTLSLGQTTSTTCKTCGMTYQVAYGPDISAHKSFHSTALNGPKWKPSVSAVVVDKSKTYTVYKSRLLSHPCVSQFLKLVNSELNAPEPILSSQAAVYVYVVDQRAVGCVLVDRITKCRHVDIQTGTLGLKEYPAVMGVSRMYVSQLFRRTGIVTKLLDLAKSDFIYGMELEKNQVAFTQPSEGGLKVAENWAGTVRVYREGE</sequence>
<comment type="function">
    <text evidence="1">Probable acetyltransferase required for the establishment of sister chromatid cohesion and couple the processes of cohesion and DNA replication to ensure that only sister chromatids become paired together. In contrast to the structural cohesins, the deposition and establishment factors are required only during S phase. Acts by acetylating the cohesin complex component SMC3 (By similarity).</text>
</comment>
<comment type="subcellular location">
    <subcellularLocation>
        <location evidence="1">Nucleus</location>
    </subcellularLocation>
</comment>
<comment type="similarity">
    <text evidence="3">Belongs to the acetyltransferase family. ECO subfamily.</text>
</comment>
<keyword id="KW-0012">Acyltransferase</keyword>
<keyword id="KW-0131">Cell cycle</keyword>
<keyword id="KW-0479">Metal-binding</keyword>
<keyword id="KW-0539">Nucleus</keyword>
<keyword id="KW-1185">Reference proteome</keyword>
<keyword id="KW-0808">Transferase</keyword>
<keyword id="KW-0862">Zinc</keyword>
<keyword id="KW-0863">Zinc-finger</keyword>
<reference key="1">
    <citation type="journal article" date="2004" name="Nature">
        <title>Genome evolution in yeasts.</title>
        <authorList>
            <person name="Dujon B."/>
            <person name="Sherman D."/>
            <person name="Fischer G."/>
            <person name="Durrens P."/>
            <person name="Casaregola S."/>
            <person name="Lafontaine I."/>
            <person name="de Montigny J."/>
            <person name="Marck C."/>
            <person name="Neuveglise C."/>
            <person name="Talla E."/>
            <person name="Goffard N."/>
            <person name="Frangeul L."/>
            <person name="Aigle M."/>
            <person name="Anthouard V."/>
            <person name="Babour A."/>
            <person name="Barbe V."/>
            <person name="Barnay S."/>
            <person name="Blanchin S."/>
            <person name="Beckerich J.-M."/>
            <person name="Beyne E."/>
            <person name="Bleykasten C."/>
            <person name="Boisrame A."/>
            <person name="Boyer J."/>
            <person name="Cattolico L."/>
            <person name="Confanioleri F."/>
            <person name="de Daruvar A."/>
            <person name="Despons L."/>
            <person name="Fabre E."/>
            <person name="Fairhead C."/>
            <person name="Ferry-Dumazet H."/>
            <person name="Groppi A."/>
            <person name="Hantraye F."/>
            <person name="Hennequin C."/>
            <person name="Jauniaux N."/>
            <person name="Joyet P."/>
            <person name="Kachouri R."/>
            <person name="Kerrest A."/>
            <person name="Koszul R."/>
            <person name="Lemaire M."/>
            <person name="Lesur I."/>
            <person name="Ma L."/>
            <person name="Muller H."/>
            <person name="Nicaud J.-M."/>
            <person name="Nikolski M."/>
            <person name="Oztas S."/>
            <person name="Ozier-Kalogeropoulos O."/>
            <person name="Pellenz S."/>
            <person name="Potier S."/>
            <person name="Richard G.-F."/>
            <person name="Straub M.-L."/>
            <person name="Suleau A."/>
            <person name="Swennen D."/>
            <person name="Tekaia F."/>
            <person name="Wesolowski-Louvel M."/>
            <person name="Westhof E."/>
            <person name="Wirth B."/>
            <person name="Zeniou-Meyer M."/>
            <person name="Zivanovic Y."/>
            <person name="Bolotin-Fukuhara M."/>
            <person name="Thierry A."/>
            <person name="Bouchier C."/>
            <person name="Caudron B."/>
            <person name="Scarpelli C."/>
            <person name="Gaillardin C."/>
            <person name="Weissenbach J."/>
            <person name="Wincker P."/>
            <person name="Souciet J.-L."/>
        </authorList>
    </citation>
    <scope>NUCLEOTIDE SEQUENCE [LARGE SCALE GENOMIC DNA]</scope>
    <source>
        <strain>CLIB 122 / E 150</strain>
    </source>
</reference>
<evidence type="ECO:0000250" key="1"/>
<evidence type="ECO:0000256" key="2">
    <source>
        <dbReference type="SAM" id="MobiDB-lite"/>
    </source>
</evidence>
<evidence type="ECO:0000305" key="3"/>
<protein>
    <recommendedName>
        <fullName>N-acetyltransferase ECO1</fullName>
        <ecNumber>2.3.1.-</ecNumber>
    </recommendedName>
    <alternativeName>
        <fullName>Establishment of cohesion protein 1</fullName>
    </alternativeName>
</protein>
<proteinExistence type="inferred from homology"/>
<feature type="chain" id="PRO_0000074549" description="N-acetyltransferase ECO1">
    <location>
        <begin position="1"/>
        <end position="271"/>
    </location>
</feature>
<feature type="zinc finger region" description="CCHH-type">
    <location>
        <begin position="80"/>
        <end position="104"/>
    </location>
</feature>
<feature type="region of interest" description="Disordered" evidence="2">
    <location>
        <begin position="1"/>
        <end position="38"/>
    </location>
</feature>
<feature type="compositionally biased region" description="Low complexity" evidence="2">
    <location>
        <begin position="20"/>
        <end position="31"/>
    </location>
</feature>